<sequence>MNLTEKWKDLLEAEGADMPEIATATKQKIMSKIFENQDRDINNDPMYRDPQLVEAFNAGLNEAVVNGDHGYDPANIAQGVTTGAVTNIGPTVMGMVRRAIPQLIAFDIAGVQPMTGPTSQVFTLRSVYGKDPLTGAEAFHPTRQADASFSGQAAASTIADFPTTGAATDGTPYKAEVTTSGGDVSMRYFLALGAVTLAVAGQMTATEYTDGVAGGLLVEIDAGMATSQAELQENFNGSSNNEWNEMSFRIDKQVVEAKSRQLKAQYSIELAQDLRAVHGLDADAELSGILANEVMVELNREIVNLVNSQAQIGKSGWTQGAGAAGVFDFSDAVDVKGARWAGEAYKALLIQIEKEANEIGRQTGRGNGNFIIASRNVVSALSMTDTLVGPAAQGMQDGSMNTDTNQTVFAGVLGGRFKVYIDQYAVNDYFTVGFKGSTEMDAGVFYSPYVPLTPLRGSDSKNFQPVIGFKTRYGVQVNPFADPTASATKVGNGAPVAASMGKNAYFRRVFVKGL</sequence>
<keyword id="KW-0167">Capsid protein</keyword>
<keyword id="KW-0903">Direct protein sequencing</keyword>
<keyword id="KW-0426">Late protein</keyword>
<keyword id="KW-1185">Reference proteome</keyword>
<keyword id="KW-0946">Virion</keyword>
<feature type="chain" id="PRO_0000432344" description="Major capsid protein">
    <location>
        <begin position="1"/>
        <end position="514"/>
    </location>
</feature>
<feature type="chain" id="PRO_0000442456" description="Mature major capsid protein" evidence="3">
    <location>
        <begin position="63"/>
        <end position="514"/>
    </location>
</feature>
<feature type="site" description="Cleavage" evidence="2 3">
    <location>
        <begin position="62"/>
        <end position="63"/>
    </location>
</feature>
<protein>
    <recommendedName>
        <fullName evidence="1 2">Major capsid protein</fullName>
    </recommendedName>
    <alternativeName>
        <fullName evidence="1">Gene product 23</fullName>
    </alternativeName>
    <alternativeName>
        <fullName evidence="2 4">Major head protein</fullName>
    </alternativeName>
    <alternativeName>
        <fullName evidence="1 2">gp23</fullName>
    </alternativeName>
    <component>
        <recommendedName>
            <fullName evidence="1 2">Mature major capsid protein</fullName>
        </recommendedName>
        <alternativeName>
            <fullName evidence="2 4">gp23*</fullName>
        </alternativeName>
    </component>
</protein>
<reference key="1">
    <citation type="journal article" date="2003" name="J. Bacteriol.">
        <title>Complete genome sequence of the broad-host-range vibriophage KVP40: comparative genomics of a T4-related bacteriophage.</title>
        <authorList>
            <person name="Miller E.S."/>
            <person name="Heidelberg J.F."/>
            <person name="Eisen J.A."/>
            <person name="Nelson W.C."/>
            <person name="Durkin A.S."/>
            <person name="Ciecko A."/>
            <person name="Feldblyum T.V."/>
            <person name="White O."/>
            <person name="Paulsen I.T."/>
            <person name="Nierman W.C."/>
            <person name="Lee J."/>
            <person name="Szczypinski B."/>
            <person name="Fraser C.M."/>
        </authorList>
    </citation>
    <scope>NUCLEOTIDE SEQUENCE [GENOMIC DNA]</scope>
    <source>
        <strain evidence="6">Isolate Vibrio parahaemolyticus/Japan/Matsuzaki /1991</strain>
    </source>
</reference>
<reference key="2">
    <citation type="journal article" date="1998" name="Virology">
        <title>A vibriophage, KVP40, with major capsid protein homologous to gp23* of coliphage T4.</title>
        <authorList>
            <person name="Matsuzaki S."/>
            <person name="Inoue T."/>
            <person name="Tanaka S."/>
        </authorList>
    </citation>
    <scope>PROTEIN SEQUENCE OF 63-80</scope>
    <scope>PROTEOLYTIC CLEAVAGE</scope>
</reference>
<accession>Q6WHE1</accession>
<comment type="function">
    <text evidence="2">Major capsid protein that self-associates to form hexamers, building most of the capsid in association with pentons made of the capsid vertex protein and one dodecamer of the portal protein.</text>
</comment>
<comment type="subunit">
    <text evidence="2">Homohexamer. Interacts with the portal protein. Interacts with the capsid vertex protein that forms pentamers.</text>
</comment>
<comment type="subcellular location">
    <molecule>Major capsid protein</molecule>
    <subcellularLocation>
        <location>Virion</location>
    </subcellularLocation>
    <text evidence="1">Part of the capsid icosahedric shell of the immature virion.</text>
</comment>
<comment type="subcellular location">
    <molecule>Mature major capsid protein</molecule>
    <subcellularLocation>
        <location evidence="1 2">Virion</location>
    </subcellularLocation>
    <text evidence="2">Part of the icosahedric capsid shell of the mature virion.</text>
</comment>
<comment type="PTM">
    <text evidence="2">A proteolytic cleavage by the prohead core protein protease gives rise to the mature major capsid protein during virus maturation.</text>
</comment>
<comment type="similarity">
    <text evidence="4">Belongs to the T4 phage capsid protein family.</text>
</comment>
<organismHost>
    <name type="scientific">Vibrio parahaemolyticus</name>
    <dbReference type="NCBI Taxonomy" id="670"/>
</organismHost>
<proteinExistence type="evidence at protein level"/>
<evidence type="ECO:0000250" key="1">
    <source>
        <dbReference type="UniProtKB" id="P04535"/>
    </source>
</evidence>
<evidence type="ECO:0000255" key="2">
    <source>
        <dbReference type="HAMAP-Rule" id="MF_04117"/>
    </source>
</evidence>
<evidence type="ECO:0000269" key="3">
    <source>
    </source>
</evidence>
<evidence type="ECO:0000305" key="4"/>
<evidence type="ECO:0000312" key="5">
    <source>
        <dbReference type="EMBL" id="AAQ64432.1"/>
    </source>
</evidence>
<evidence type="ECO:0000312" key="6">
    <source>
        <dbReference type="Proteomes" id="UP000001785"/>
    </source>
</evidence>
<organism evidence="6">
    <name type="scientific">Vibrio phage KVP40 (isolate Vibrio parahaemolyticus/Japan/Matsuzaki/1991)</name>
    <name type="common">KVP40</name>
    <name type="synonym">Bacteriophage KVP40</name>
    <dbReference type="NCBI Taxonomy" id="75320"/>
    <lineage>
        <taxon>Viruses</taxon>
        <taxon>Duplodnaviria</taxon>
        <taxon>Heunggongvirae</taxon>
        <taxon>Uroviricota</taxon>
        <taxon>Caudoviricetes</taxon>
        <taxon>Straboviridae</taxon>
        <taxon>Schizotequatrovirus</taxon>
        <taxon>Schizotequatrovirus KVP40</taxon>
    </lineage>
</organism>
<gene>
    <name evidence="5" type="primary">23</name>
    <name evidence="5" type="ordered locus">KVP40.0363</name>
</gene>
<dbReference type="EMBL" id="AY283928">
    <property type="protein sequence ID" value="AAQ64432.1"/>
    <property type="molecule type" value="Genomic_DNA"/>
</dbReference>
<dbReference type="RefSeq" id="NP_899609.1">
    <property type="nucleotide sequence ID" value="NC_005083.2"/>
</dbReference>
<dbReference type="SMR" id="Q6WHE1"/>
<dbReference type="GeneID" id="2546039"/>
<dbReference type="KEGG" id="vg:2546039"/>
<dbReference type="OrthoDB" id="2241at10239"/>
<dbReference type="Proteomes" id="UP000001785">
    <property type="component" value="Genome"/>
</dbReference>
<dbReference type="GO" id="GO:0019028">
    <property type="term" value="C:viral capsid"/>
    <property type="evidence" value="ECO:0007669"/>
    <property type="project" value="UniProtKB-UniRule"/>
</dbReference>
<dbReference type="Gene3D" id="3.30.2320.40">
    <property type="match status" value="1"/>
</dbReference>
<dbReference type="HAMAP" id="MF_04117">
    <property type="entry name" value="CAPSID_H_T4"/>
    <property type="match status" value="1"/>
</dbReference>
<dbReference type="InterPro" id="IPR038997">
    <property type="entry name" value="CAPSID_Myoviridae"/>
</dbReference>
<dbReference type="InterPro" id="IPR010762">
    <property type="entry name" value="Gp23/Gp24_T4-like"/>
</dbReference>
<dbReference type="Pfam" id="PF07068">
    <property type="entry name" value="Gp23"/>
    <property type="match status" value="1"/>
</dbReference>
<name>CAPSH_BPKVM</name>